<comment type="function">
    <text evidence="1">Participates in the translocation of lipoproteins from the inner membrane to the outer membrane. Only forms a complex with a lipoprotein if the residue after the N-terminal Cys is not an aspartate (The Asp acts as a targeting signal to indicate that the lipoprotein should stay in the inner membrane).</text>
</comment>
<comment type="subunit">
    <text evidence="1">Monomer.</text>
</comment>
<comment type="subcellular location">
    <subcellularLocation>
        <location evidence="1">Periplasm</location>
    </subcellularLocation>
</comment>
<comment type="similarity">
    <text evidence="1">Belongs to the LolA family.</text>
</comment>
<accession>Q2YCN5</accession>
<evidence type="ECO:0000255" key="1">
    <source>
        <dbReference type="HAMAP-Rule" id="MF_00240"/>
    </source>
</evidence>
<reference key="1">
    <citation type="submission" date="2005-08" db="EMBL/GenBank/DDBJ databases">
        <title>Complete sequence of chromosome 1 of Nitrosospira multiformis ATCC 25196.</title>
        <authorList>
            <person name="Copeland A."/>
            <person name="Lucas S."/>
            <person name="Lapidus A."/>
            <person name="Barry K."/>
            <person name="Detter J.C."/>
            <person name="Glavina T."/>
            <person name="Hammon N."/>
            <person name="Israni S."/>
            <person name="Pitluck S."/>
            <person name="Chain P."/>
            <person name="Malfatti S."/>
            <person name="Shin M."/>
            <person name="Vergez L."/>
            <person name="Schmutz J."/>
            <person name="Larimer F."/>
            <person name="Land M."/>
            <person name="Hauser L."/>
            <person name="Kyrpides N."/>
            <person name="Lykidis A."/>
            <person name="Richardson P."/>
        </authorList>
    </citation>
    <scope>NUCLEOTIDE SEQUENCE [LARGE SCALE GENOMIC DNA]</scope>
    <source>
        <strain>ATCC 25196 / NCIMB 11849 / C 71</strain>
    </source>
</reference>
<protein>
    <recommendedName>
        <fullName evidence="1">Outer-membrane lipoprotein carrier protein</fullName>
    </recommendedName>
</protein>
<dbReference type="EMBL" id="CP000103">
    <property type="protein sequence ID" value="ABB73486.1"/>
    <property type="molecule type" value="Genomic_DNA"/>
</dbReference>
<dbReference type="RefSeq" id="WP_011379540.1">
    <property type="nucleotide sequence ID" value="NC_007614.1"/>
</dbReference>
<dbReference type="SMR" id="Q2YCN5"/>
<dbReference type="STRING" id="323848.Nmul_A0178"/>
<dbReference type="KEGG" id="nmu:Nmul_A0178"/>
<dbReference type="eggNOG" id="COG2834">
    <property type="taxonomic scope" value="Bacteria"/>
</dbReference>
<dbReference type="HOGENOM" id="CLU_087560_0_0_4"/>
<dbReference type="OrthoDB" id="9787361at2"/>
<dbReference type="Proteomes" id="UP000002718">
    <property type="component" value="Chromosome"/>
</dbReference>
<dbReference type="GO" id="GO:0042597">
    <property type="term" value="C:periplasmic space"/>
    <property type="evidence" value="ECO:0007669"/>
    <property type="project" value="UniProtKB-SubCell"/>
</dbReference>
<dbReference type="GO" id="GO:0044874">
    <property type="term" value="P:lipoprotein localization to outer membrane"/>
    <property type="evidence" value="ECO:0007669"/>
    <property type="project" value="UniProtKB-UniRule"/>
</dbReference>
<dbReference type="GO" id="GO:0042953">
    <property type="term" value="P:lipoprotein transport"/>
    <property type="evidence" value="ECO:0007669"/>
    <property type="project" value="InterPro"/>
</dbReference>
<dbReference type="CDD" id="cd16325">
    <property type="entry name" value="LolA"/>
    <property type="match status" value="1"/>
</dbReference>
<dbReference type="Gene3D" id="2.50.20.10">
    <property type="entry name" value="Lipoprotein localisation LolA/LolB/LppX"/>
    <property type="match status" value="1"/>
</dbReference>
<dbReference type="HAMAP" id="MF_00240">
    <property type="entry name" value="LolA"/>
    <property type="match status" value="1"/>
</dbReference>
<dbReference type="InterPro" id="IPR029046">
    <property type="entry name" value="LolA/LolB/LppX"/>
</dbReference>
<dbReference type="InterPro" id="IPR004564">
    <property type="entry name" value="OM_lipoprot_carrier_LolA-like"/>
</dbReference>
<dbReference type="InterPro" id="IPR018323">
    <property type="entry name" value="OM_lipoprot_carrier_LolA_Pbac"/>
</dbReference>
<dbReference type="NCBIfam" id="TIGR00547">
    <property type="entry name" value="lolA"/>
    <property type="match status" value="1"/>
</dbReference>
<dbReference type="PANTHER" id="PTHR35869">
    <property type="entry name" value="OUTER-MEMBRANE LIPOPROTEIN CARRIER PROTEIN"/>
    <property type="match status" value="1"/>
</dbReference>
<dbReference type="PANTHER" id="PTHR35869:SF1">
    <property type="entry name" value="OUTER-MEMBRANE LIPOPROTEIN CARRIER PROTEIN"/>
    <property type="match status" value="1"/>
</dbReference>
<dbReference type="Pfam" id="PF03548">
    <property type="entry name" value="LolA"/>
    <property type="match status" value="1"/>
</dbReference>
<dbReference type="SUPFAM" id="SSF89392">
    <property type="entry name" value="Prokaryotic lipoproteins and lipoprotein localization factors"/>
    <property type="match status" value="1"/>
</dbReference>
<sequence>MKLSEKFCVFLFFLLFTSTTHATGIGSLKSFMENARTVRADFAQTVLDKSRHIVQTASGAMQFERPGKFRWIYEKPYEQLIVGDGERIWFYDHDLAQVTVRKLDAAIGSSPAALLAGNNDIEKNFHLLEIGLQGNIEWVEATPKTRESTFERVLLGFTLEGILRVMELHDNFGQVTVFEFSGVEQNRKLPPELFKFSPPAGVDVISE</sequence>
<feature type="signal peptide" evidence="1">
    <location>
        <begin position="1"/>
        <end position="22"/>
    </location>
</feature>
<feature type="chain" id="PRO_5000101331" description="Outer-membrane lipoprotein carrier protein">
    <location>
        <begin position="23"/>
        <end position="207"/>
    </location>
</feature>
<name>LOLA_NITMU</name>
<proteinExistence type="inferred from homology"/>
<keyword id="KW-0143">Chaperone</keyword>
<keyword id="KW-0574">Periplasm</keyword>
<keyword id="KW-0653">Protein transport</keyword>
<keyword id="KW-1185">Reference proteome</keyword>
<keyword id="KW-0732">Signal</keyword>
<keyword id="KW-0813">Transport</keyword>
<gene>
    <name evidence="1" type="primary">lolA</name>
    <name type="ordered locus">Nmul_A0178</name>
</gene>
<organism>
    <name type="scientific">Nitrosospira multiformis (strain ATCC 25196 / NCIMB 11849 / C 71)</name>
    <dbReference type="NCBI Taxonomy" id="323848"/>
    <lineage>
        <taxon>Bacteria</taxon>
        <taxon>Pseudomonadati</taxon>
        <taxon>Pseudomonadota</taxon>
        <taxon>Betaproteobacteria</taxon>
        <taxon>Nitrosomonadales</taxon>
        <taxon>Nitrosomonadaceae</taxon>
        <taxon>Nitrosospira</taxon>
    </lineage>
</organism>